<sequence length="404" mass="44675">MQQVKKVVLAYSGGVDTSVCIPYLKNEYGISEVVTFVADLGQGDDLEIVRQKALNSGATKSVIGNLVDNFVEKYAFPAIRANALYGEKYPLSTALARPLIAENLVNLARELNADAVAHGCTGKGNDQVRFDLAIHALGPDLQIITPAREWKMSREEAILYGEKFGIPAPVSKKSPYSIDVNLLGRSIEAGLLEDPMQEPDEDVFDMTSSINNAPNAPKDVEIIFQNGFPIAIGNEFLSPVEIIQKANSLAGEHGFGRIDMIEDRVVGIKSREIYEAPGLLLLIKAHKELESITLNPDVLDFKNIVEKKWGQLVYQGFWFGPLKQALDGFIDSTQSSVNGKVKIRLHKGNAIVIGRSSQNNSLYREDLATYSKDDIFNHKQAEGFIYMWGMSNKIWAELNSKKNK</sequence>
<gene>
    <name evidence="1" type="primary">argG</name>
    <name type="ordered locus">PMM1707</name>
</gene>
<name>ASSY_PROMP</name>
<accession>Q7UZG0</accession>
<proteinExistence type="inferred from homology"/>
<organism>
    <name type="scientific">Prochlorococcus marinus subsp. pastoris (strain CCMP1986 / NIES-2087 / MED4)</name>
    <dbReference type="NCBI Taxonomy" id="59919"/>
    <lineage>
        <taxon>Bacteria</taxon>
        <taxon>Bacillati</taxon>
        <taxon>Cyanobacteriota</taxon>
        <taxon>Cyanophyceae</taxon>
        <taxon>Synechococcales</taxon>
        <taxon>Prochlorococcaceae</taxon>
        <taxon>Prochlorococcus</taxon>
    </lineage>
</organism>
<feature type="chain" id="PRO_0000148625" description="Argininosuccinate synthase">
    <location>
        <begin position="1"/>
        <end position="404"/>
    </location>
</feature>
<feature type="binding site" evidence="1">
    <location>
        <begin position="10"/>
        <end position="18"/>
    </location>
    <ligand>
        <name>ATP</name>
        <dbReference type="ChEBI" id="CHEBI:30616"/>
    </ligand>
</feature>
<feature type="binding site" evidence="1">
    <location>
        <position position="38"/>
    </location>
    <ligand>
        <name>ATP</name>
        <dbReference type="ChEBI" id="CHEBI:30616"/>
    </ligand>
</feature>
<feature type="binding site" evidence="1">
    <location>
        <position position="89"/>
    </location>
    <ligand>
        <name>L-citrulline</name>
        <dbReference type="ChEBI" id="CHEBI:57743"/>
    </ligand>
</feature>
<feature type="binding site" evidence="1">
    <location>
        <position position="119"/>
    </location>
    <ligand>
        <name>ATP</name>
        <dbReference type="ChEBI" id="CHEBI:30616"/>
    </ligand>
</feature>
<feature type="binding site" evidence="1">
    <location>
        <position position="121"/>
    </location>
    <ligand>
        <name>L-aspartate</name>
        <dbReference type="ChEBI" id="CHEBI:29991"/>
    </ligand>
</feature>
<feature type="binding site" evidence="1">
    <location>
        <position position="125"/>
    </location>
    <ligand>
        <name>L-aspartate</name>
        <dbReference type="ChEBI" id="CHEBI:29991"/>
    </ligand>
</feature>
<feature type="binding site" evidence="1">
    <location>
        <position position="125"/>
    </location>
    <ligand>
        <name>L-citrulline</name>
        <dbReference type="ChEBI" id="CHEBI:57743"/>
    </ligand>
</feature>
<feature type="binding site" evidence="1">
    <location>
        <position position="126"/>
    </location>
    <ligand>
        <name>L-aspartate</name>
        <dbReference type="ChEBI" id="CHEBI:29991"/>
    </ligand>
</feature>
<feature type="binding site" evidence="1">
    <location>
        <position position="129"/>
    </location>
    <ligand>
        <name>L-citrulline</name>
        <dbReference type="ChEBI" id="CHEBI:57743"/>
    </ligand>
</feature>
<feature type="binding site" evidence="1">
    <location>
        <position position="177"/>
    </location>
    <ligand>
        <name>L-citrulline</name>
        <dbReference type="ChEBI" id="CHEBI:57743"/>
    </ligand>
</feature>
<feature type="binding site" evidence="1">
    <location>
        <position position="186"/>
    </location>
    <ligand>
        <name>L-citrulline</name>
        <dbReference type="ChEBI" id="CHEBI:57743"/>
    </ligand>
</feature>
<feature type="binding site" evidence="1">
    <location>
        <position position="262"/>
    </location>
    <ligand>
        <name>L-citrulline</name>
        <dbReference type="ChEBI" id="CHEBI:57743"/>
    </ligand>
</feature>
<feature type="binding site" evidence="1">
    <location>
        <position position="274"/>
    </location>
    <ligand>
        <name>L-citrulline</name>
        <dbReference type="ChEBI" id="CHEBI:57743"/>
    </ligand>
</feature>
<reference key="1">
    <citation type="journal article" date="2003" name="Nature">
        <title>Genome divergence in two Prochlorococcus ecotypes reflects oceanic niche differentiation.</title>
        <authorList>
            <person name="Rocap G."/>
            <person name="Larimer F.W."/>
            <person name="Lamerdin J.E."/>
            <person name="Malfatti S."/>
            <person name="Chain P."/>
            <person name="Ahlgren N.A."/>
            <person name="Arellano A."/>
            <person name="Coleman M."/>
            <person name="Hauser L."/>
            <person name="Hess W.R."/>
            <person name="Johnson Z.I."/>
            <person name="Land M.L."/>
            <person name="Lindell D."/>
            <person name="Post A.F."/>
            <person name="Regala W."/>
            <person name="Shah M."/>
            <person name="Shaw S.L."/>
            <person name="Steglich C."/>
            <person name="Sullivan M.B."/>
            <person name="Ting C.S."/>
            <person name="Tolonen A."/>
            <person name="Webb E.A."/>
            <person name="Zinser E.R."/>
            <person name="Chisholm S.W."/>
        </authorList>
    </citation>
    <scope>NUCLEOTIDE SEQUENCE [LARGE SCALE GENOMIC DNA]</scope>
    <source>
        <strain>CCMP1986 / NIES-2087 / MED4</strain>
    </source>
</reference>
<comment type="catalytic activity">
    <reaction evidence="1">
        <text>L-citrulline + L-aspartate + ATP = 2-(N(omega)-L-arginino)succinate + AMP + diphosphate + H(+)</text>
        <dbReference type="Rhea" id="RHEA:10932"/>
        <dbReference type="ChEBI" id="CHEBI:15378"/>
        <dbReference type="ChEBI" id="CHEBI:29991"/>
        <dbReference type="ChEBI" id="CHEBI:30616"/>
        <dbReference type="ChEBI" id="CHEBI:33019"/>
        <dbReference type="ChEBI" id="CHEBI:57472"/>
        <dbReference type="ChEBI" id="CHEBI:57743"/>
        <dbReference type="ChEBI" id="CHEBI:456215"/>
        <dbReference type="EC" id="6.3.4.5"/>
    </reaction>
</comment>
<comment type="pathway">
    <text evidence="1">Amino-acid biosynthesis; L-arginine biosynthesis; L-arginine from L-ornithine and carbamoyl phosphate: step 2/3.</text>
</comment>
<comment type="subunit">
    <text evidence="1">Homotetramer.</text>
</comment>
<comment type="subcellular location">
    <subcellularLocation>
        <location evidence="1">Cytoplasm</location>
    </subcellularLocation>
</comment>
<comment type="similarity">
    <text evidence="1">Belongs to the argininosuccinate synthase family. Type 1 subfamily.</text>
</comment>
<keyword id="KW-0028">Amino-acid biosynthesis</keyword>
<keyword id="KW-0055">Arginine biosynthesis</keyword>
<keyword id="KW-0067">ATP-binding</keyword>
<keyword id="KW-0963">Cytoplasm</keyword>
<keyword id="KW-0436">Ligase</keyword>
<keyword id="KW-0547">Nucleotide-binding</keyword>
<protein>
    <recommendedName>
        <fullName evidence="1">Argininosuccinate synthase</fullName>
        <ecNumber evidence="1">6.3.4.5</ecNumber>
    </recommendedName>
    <alternativeName>
        <fullName evidence="1">Citrulline--aspartate ligase</fullName>
    </alternativeName>
</protein>
<dbReference type="EC" id="6.3.4.5" evidence="1"/>
<dbReference type="EMBL" id="BX548174">
    <property type="protein sequence ID" value="CAE20166.1"/>
    <property type="molecule type" value="Genomic_DNA"/>
</dbReference>
<dbReference type="RefSeq" id="WP_011133334.1">
    <property type="nucleotide sequence ID" value="NC_005072.1"/>
</dbReference>
<dbReference type="SMR" id="Q7UZG0"/>
<dbReference type="STRING" id="59919.PMM1707"/>
<dbReference type="KEGG" id="pmm:PMM1707"/>
<dbReference type="eggNOG" id="COG0137">
    <property type="taxonomic scope" value="Bacteria"/>
</dbReference>
<dbReference type="HOGENOM" id="CLU_032784_4_2_3"/>
<dbReference type="OrthoDB" id="9801641at2"/>
<dbReference type="UniPathway" id="UPA00068">
    <property type="reaction ID" value="UER00113"/>
</dbReference>
<dbReference type="Proteomes" id="UP000001026">
    <property type="component" value="Chromosome"/>
</dbReference>
<dbReference type="GO" id="GO:0005737">
    <property type="term" value="C:cytoplasm"/>
    <property type="evidence" value="ECO:0007669"/>
    <property type="project" value="UniProtKB-SubCell"/>
</dbReference>
<dbReference type="GO" id="GO:0004055">
    <property type="term" value="F:argininosuccinate synthase activity"/>
    <property type="evidence" value="ECO:0007669"/>
    <property type="project" value="UniProtKB-UniRule"/>
</dbReference>
<dbReference type="GO" id="GO:0005524">
    <property type="term" value="F:ATP binding"/>
    <property type="evidence" value="ECO:0007669"/>
    <property type="project" value="UniProtKB-UniRule"/>
</dbReference>
<dbReference type="GO" id="GO:0000053">
    <property type="term" value="P:argininosuccinate metabolic process"/>
    <property type="evidence" value="ECO:0007669"/>
    <property type="project" value="TreeGrafter"/>
</dbReference>
<dbReference type="GO" id="GO:0006526">
    <property type="term" value="P:L-arginine biosynthetic process"/>
    <property type="evidence" value="ECO:0007669"/>
    <property type="project" value="UniProtKB-UniRule"/>
</dbReference>
<dbReference type="GO" id="GO:0000050">
    <property type="term" value="P:urea cycle"/>
    <property type="evidence" value="ECO:0007669"/>
    <property type="project" value="TreeGrafter"/>
</dbReference>
<dbReference type="CDD" id="cd01999">
    <property type="entry name" value="ASS"/>
    <property type="match status" value="1"/>
</dbReference>
<dbReference type="FunFam" id="3.40.50.620:FF:000019">
    <property type="entry name" value="Argininosuccinate synthase"/>
    <property type="match status" value="1"/>
</dbReference>
<dbReference type="FunFam" id="3.90.1260.10:FF:000007">
    <property type="entry name" value="Argininosuccinate synthase"/>
    <property type="match status" value="1"/>
</dbReference>
<dbReference type="Gene3D" id="3.90.1260.10">
    <property type="entry name" value="Argininosuccinate synthetase, chain A, domain 2"/>
    <property type="match status" value="1"/>
</dbReference>
<dbReference type="Gene3D" id="3.40.50.620">
    <property type="entry name" value="HUPs"/>
    <property type="match status" value="1"/>
</dbReference>
<dbReference type="Gene3D" id="1.20.5.470">
    <property type="entry name" value="Single helix bin"/>
    <property type="match status" value="1"/>
</dbReference>
<dbReference type="HAMAP" id="MF_00005">
    <property type="entry name" value="Arg_succ_synth_type1"/>
    <property type="match status" value="1"/>
</dbReference>
<dbReference type="InterPro" id="IPR048268">
    <property type="entry name" value="Arginosuc_syn_C"/>
</dbReference>
<dbReference type="InterPro" id="IPR048267">
    <property type="entry name" value="Arginosuc_syn_N"/>
</dbReference>
<dbReference type="InterPro" id="IPR001518">
    <property type="entry name" value="Arginosuc_synth"/>
</dbReference>
<dbReference type="InterPro" id="IPR018223">
    <property type="entry name" value="Arginosuc_synth_CS"/>
</dbReference>
<dbReference type="InterPro" id="IPR023434">
    <property type="entry name" value="Arginosuc_synth_type_1_subfam"/>
</dbReference>
<dbReference type="InterPro" id="IPR024074">
    <property type="entry name" value="AS_cat/multimer_dom_body"/>
</dbReference>
<dbReference type="InterPro" id="IPR014729">
    <property type="entry name" value="Rossmann-like_a/b/a_fold"/>
</dbReference>
<dbReference type="NCBIfam" id="TIGR00032">
    <property type="entry name" value="argG"/>
    <property type="match status" value="1"/>
</dbReference>
<dbReference type="NCBIfam" id="NF001770">
    <property type="entry name" value="PRK00509.1"/>
    <property type="match status" value="1"/>
</dbReference>
<dbReference type="PANTHER" id="PTHR11587">
    <property type="entry name" value="ARGININOSUCCINATE SYNTHASE"/>
    <property type="match status" value="1"/>
</dbReference>
<dbReference type="PANTHER" id="PTHR11587:SF2">
    <property type="entry name" value="ARGININOSUCCINATE SYNTHASE"/>
    <property type="match status" value="1"/>
</dbReference>
<dbReference type="Pfam" id="PF20979">
    <property type="entry name" value="Arginosuc_syn_C"/>
    <property type="match status" value="1"/>
</dbReference>
<dbReference type="Pfam" id="PF00764">
    <property type="entry name" value="Arginosuc_synth"/>
    <property type="match status" value="1"/>
</dbReference>
<dbReference type="SUPFAM" id="SSF52402">
    <property type="entry name" value="Adenine nucleotide alpha hydrolases-like"/>
    <property type="match status" value="1"/>
</dbReference>
<dbReference type="SUPFAM" id="SSF69864">
    <property type="entry name" value="Argininosuccinate synthetase, C-terminal domain"/>
    <property type="match status" value="1"/>
</dbReference>
<dbReference type="PROSITE" id="PS00564">
    <property type="entry name" value="ARGININOSUCCIN_SYN_1"/>
    <property type="match status" value="1"/>
</dbReference>
<dbReference type="PROSITE" id="PS00565">
    <property type="entry name" value="ARGININOSUCCIN_SYN_2"/>
    <property type="match status" value="1"/>
</dbReference>
<evidence type="ECO:0000255" key="1">
    <source>
        <dbReference type="HAMAP-Rule" id="MF_00005"/>
    </source>
</evidence>